<accession>O80910</accession>
<protein>
    <recommendedName>
        <fullName evidence="9">TOM1-like protein 6</fullName>
    </recommendedName>
</protein>
<reference key="1">
    <citation type="journal article" date="1999" name="Nature">
        <title>Sequence and analysis of chromosome 2 of the plant Arabidopsis thaliana.</title>
        <authorList>
            <person name="Lin X."/>
            <person name="Kaul S."/>
            <person name="Rounsley S.D."/>
            <person name="Shea T.P."/>
            <person name="Benito M.-I."/>
            <person name="Town C.D."/>
            <person name="Fujii C.Y."/>
            <person name="Mason T.M."/>
            <person name="Bowman C.L."/>
            <person name="Barnstead M.E."/>
            <person name="Feldblyum T.V."/>
            <person name="Buell C.R."/>
            <person name="Ketchum K.A."/>
            <person name="Lee J.J."/>
            <person name="Ronning C.M."/>
            <person name="Koo H.L."/>
            <person name="Moffat K.S."/>
            <person name="Cronin L.A."/>
            <person name="Shen M."/>
            <person name="Pai G."/>
            <person name="Van Aken S."/>
            <person name="Umayam L."/>
            <person name="Tallon L.J."/>
            <person name="Gill J.E."/>
            <person name="Adams M.D."/>
            <person name="Carrera A.J."/>
            <person name="Creasy T.H."/>
            <person name="Goodman H.M."/>
            <person name="Somerville C.R."/>
            <person name="Copenhaver G.P."/>
            <person name="Preuss D."/>
            <person name="Nierman W.C."/>
            <person name="White O."/>
            <person name="Eisen J.A."/>
            <person name="Salzberg S.L."/>
            <person name="Fraser C.M."/>
            <person name="Venter J.C."/>
        </authorList>
    </citation>
    <scope>NUCLEOTIDE SEQUENCE [LARGE SCALE GENOMIC DNA]</scope>
    <source>
        <strain>cv. Columbia</strain>
    </source>
</reference>
<reference key="2">
    <citation type="journal article" date="2017" name="Plant J.">
        <title>Araport11: a complete reannotation of the Arabidopsis thaliana reference genome.</title>
        <authorList>
            <person name="Cheng C.Y."/>
            <person name="Krishnakumar V."/>
            <person name="Chan A.P."/>
            <person name="Thibaud-Nissen F."/>
            <person name="Schobel S."/>
            <person name="Town C.D."/>
        </authorList>
    </citation>
    <scope>GENOME REANNOTATION</scope>
    <source>
        <strain>cv. Columbia</strain>
    </source>
</reference>
<reference key="3">
    <citation type="submission" date="2008-10" db="EMBL/GenBank/DDBJ databases">
        <title>Arabidopsis ORF clones.</title>
        <authorList>
            <person name="de los Reyes C."/>
            <person name="Quan R."/>
            <person name="Chen H."/>
            <person name="Bautista V."/>
            <person name="Kim C.J."/>
            <person name="Ecker J.R."/>
        </authorList>
    </citation>
    <scope>NUCLEOTIDE SEQUENCE [LARGE SCALE MRNA]</scope>
    <source>
        <strain>cv. Columbia</strain>
    </source>
</reference>
<reference key="4">
    <citation type="journal article" date="2006" name="Trends Plant Sci.">
        <title>Exploring the ESCRTing machinery in eukaryotes.</title>
        <authorList>
            <person name="Winter V."/>
            <person name="Hauser M.-T."/>
        </authorList>
    </citation>
    <scope>GENE FAMILY</scope>
    <scope>REVIEW</scope>
</reference>
<reference key="5">
    <citation type="journal article" date="2009" name="Plant Physiol.">
        <title>Large-scale Arabidopsis phosphoproteome profiling reveals novel chloroplast kinase substrates and phosphorylation networks.</title>
        <authorList>
            <person name="Reiland S."/>
            <person name="Messerli G."/>
            <person name="Baerenfaller K."/>
            <person name="Gerrits B."/>
            <person name="Endler A."/>
            <person name="Grossmann J."/>
            <person name="Gruissem W."/>
            <person name="Baginsky S."/>
        </authorList>
    </citation>
    <scope>PHOSPHORYLATION [LARGE SCALE ANALYSIS] AT SER-147 AND SER-596</scope>
    <scope>IDENTIFICATION BY MASS SPECTROMETRY [LARGE SCALE ANALYSIS]</scope>
</reference>
<reference key="6">
    <citation type="journal article" date="2011" name="Front. Plant Sci.">
        <title>Protein-protein interaction network and subcellular localization of the Arabidopsis thaliana ESCRT machinery.</title>
        <authorList>
            <person name="Richardson L.G."/>
            <person name="Howard A.S."/>
            <person name="Khuu N."/>
            <person name="Gidda S.K."/>
            <person name="McCartney A."/>
            <person name="Morphy B.J."/>
            <person name="Mullen R.T."/>
        </authorList>
    </citation>
    <scope>GENE FAMILY</scope>
    <scope>NOMENCLATURE</scope>
    <scope>SUBCELLULAR LOCATION</scope>
</reference>
<reference key="7">
    <citation type="journal article" date="2012" name="Mol. Cell. Proteomics">
        <title>Comparative large-scale characterisation of plant vs. mammal proteins reveals similar and idiosyncratic N-alpha acetylation features.</title>
        <authorList>
            <person name="Bienvenut W.V."/>
            <person name="Sumpton D."/>
            <person name="Martinez A."/>
            <person name="Lilla S."/>
            <person name="Espagne C."/>
            <person name="Meinnel T."/>
            <person name="Giglione C."/>
        </authorList>
    </citation>
    <scope>ACETYLATION [LARGE SCALE ANALYSIS] AT ALA-2</scope>
    <scope>CLEAVAGE OF INITIATOR METHIONINE [LARGE SCALE ANALYSIS]</scope>
    <scope>IDENTIFICATION BY MASS SPECTROMETRY [LARGE SCALE ANALYSIS]</scope>
</reference>
<reference key="8">
    <citation type="journal article" date="2013" name="Curr. Biol.">
        <title>Arabidopsis TOL proteins act as gatekeepers for vacuolar sorting of PIN2 plasma membrane protein.</title>
        <authorList>
            <person name="Korbei B."/>
            <person name="Moulinier-Anzola J."/>
            <person name="De-Araujo L."/>
            <person name="Lucyshyn D."/>
            <person name="Retzer K."/>
            <person name="Khan M.A."/>
            <person name="Luschnig C."/>
        </authorList>
    </citation>
    <scope>GENE FAMILY</scope>
    <scope>NOMENCLATURE</scope>
    <scope>FUNCTION</scope>
    <scope>SUBCELLULAR LOCATION</scope>
</reference>
<reference key="9">
    <citation type="journal article" date="2014" name="Plant Signal. Behav.">
        <title>Expression of Arabidopsis TOL genes.</title>
        <authorList>
            <person name="Moulinier-Anzola J."/>
            <person name="De-Araujo L."/>
            <person name="Korbei B."/>
        </authorList>
    </citation>
    <scope>TISSUE SPECIFICITY</scope>
</reference>
<organism>
    <name type="scientific">Arabidopsis thaliana</name>
    <name type="common">Mouse-ear cress</name>
    <dbReference type="NCBI Taxonomy" id="3702"/>
    <lineage>
        <taxon>Eukaryota</taxon>
        <taxon>Viridiplantae</taxon>
        <taxon>Streptophyta</taxon>
        <taxon>Embryophyta</taxon>
        <taxon>Tracheophyta</taxon>
        <taxon>Spermatophyta</taxon>
        <taxon>Magnoliopsida</taxon>
        <taxon>eudicotyledons</taxon>
        <taxon>Gunneridae</taxon>
        <taxon>Pentapetalae</taxon>
        <taxon>rosids</taxon>
        <taxon>malvids</taxon>
        <taxon>Brassicales</taxon>
        <taxon>Brassicaceae</taxon>
        <taxon>Camelineae</taxon>
        <taxon>Arabidopsis</taxon>
    </lineage>
</organism>
<gene>
    <name evidence="8" type="primary">TOL6</name>
    <name evidence="7" type="synonym">TOM1A</name>
    <name evidence="11" type="ordered locus">At2g38410</name>
    <name evidence="12" type="ORF">T19C21.10</name>
</gene>
<sequence length="671" mass="72318">MASSSASATVAVDKATSDLLLGPDWTTNMEICDSVNSLHWQAKDVVKAVKKRLQHKSSRVQLLALTLLETLVKNCGDYLHHQVAEKNILGEMVKIVKKKADMQVRDKILVMVDSWQQAFGGPEGKYPQYYWAYDELRRSGVEFPRRSPDASPIITPPVSHPPLRQPQGGYGVPPAGYGVHQAGYGVPQAGYGIPQAGYGVPQAGYGIPQVGYGMPSGSSRRLDEAMATEVEGLSLSSIESMRDVMDLLGDMLQAVDPSDREAVKDEVIVDLVERCRSNQKKLMQMLTSTGDDELLGRGLDLNDSLQILLAKHDAIASGSPLPVQASGSPLSVQASKPADSSPKSSEAKDSSSIAGSSSPIPATVSTGKSPIDEEYEEEEDEFAQLARRHSKPPASVTTDPTSLESHNAASNALALALPDPPPPVNTTKEQDMIDLLSITLCTPSTPPAPSSQPSPPPPAGSDQNTHIYPQPQPRFDSYVAPWAQQQQPQQPQAQQGYSQHQQHQQQQGYSQPQHSQQQQGYSQLQQPQPQQGYSQSQPQAQVQMQPSTRPQNPYEYPPPPWASTSANAYYTPRANASASYTDTSALAGRSLQQSNSFPTRAGDPQATSTASNSGVSVGQKPFVPSYRLFEDLDVFGSADGKHNKPANSSNGSQNLSGSQTQQSMIGGRKMI</sequence>
<evidence type="ECO:0000255" key="1">
    <source>
        <dbReference type="PROSITE-ProRule" id="PRU00218"/>
    </source>
</evidence>
<evidence type="ECO:0000255" key="2">
    <source>
        <dbReference type="PROSITE-ProRule" id="PRU00373"/>
    </source>
</evidence>
<evidence type="ECO:0000256" key="3">
    <source>
        <dbReference type="SAM" id="MobiDB-lite"/>
    </source>
</evidence>
<evidence type="ECO:0000269" key="4">
    <source>
    </source>
</evidence>
<evidence type="ECO:0000269" key="5">
    <source>
    </source>
</evidence>
<evidence type="ECO:0000269" key="6">
    <source>
    </source>
</evidence>
<evidence type="ECO:0000303" key="7">
    <source>
    </source>
</evidence>
<evidence type="ECO:0000303" key="8">
    <source>
    </source>
</evidence>
<evidence type="ECO:0000305" key="9"/>
<evidence type="ECO:0000305" key="10">
    <source>
    </source>
</evidence>
<evidence type="ECO:0000312" key="11">
    <source>
        <dbReference type="Araport" id="AT2G38410"/>
    </source>
</evidence>
<evidence type="ECO:0000312" key="12">
    <source>
        <dbReference type="EMBL" id="AAC28763.1"/>
    </source>
</evidence>
<evidence type="ECO:0007744" key="13">
    <source>
    </source>
</evidence>
<evidence type="ECO:0007744" key="14">
    <source>
    </source>
</evidence>
<proteinExistence type="evidence at protein level"/>
<dbReference type="EMBL" id="AC004683">
    <property type="protein sequence ID" value="AAC28763.1"/>
    <property type="molecule type" value="Genomic_DNA"/>
</dbReference>
<dbReference type="EMBL" id="CP002685">
    <property type="protein sequence ID" value="AEC09534.1"/>
    <property type="molecule type" value="Genomic_DNA"/>
</dbReference>
<dbReference type="EMBL" id="BT046195">
    <property type="protein sequence ID" value="ACI49794.1"/>
    <property type="molecule type" value="mRNA"/>
</dbReference>
<dbReference type="PIR" id="T02504">
    <property type="entry name" value="T02504"/>
</dbReference>
<dbReference type="RefSeq" id="NP_181375.1">
    <property type="nucleotide sequence ID" value="NM_129397.3"/>
</dbReference>
<dbReference type="SMR" id="O80910"/>
<dbReference type="FunCoup" id="O80910">
    <property type="interactions" value="2407"/>
</dbReference>
<dbReference type="STRING" id="3702.O80910"/>
<dbReference type="GlyGen" id="O80910">
    <property type="glycosylation" value="3 sites, 1 O-linked glycan (3 sites)"/>
</dbReference>
<dbReference type="iPTMnet" id="O80910"/>
<dbReference type="PaxDb" id="3702-AT2G38410.1"/>
<dbReference type="ProteomicsDB" id="234442"/>
<dbReference type="EnsemblPlants" id="AT2G38410.1">
    <property type="protein sequence ID" value="AT2G38410.1"/>
    <property type="gene ID" value="AT2G38410"/>
</dbReference>
<dbReference type="GeneID" id="818422"/>
<dbReference type="Gramene" id="AT2G38410.1">
    <property type="protein sequence ID" value="AT2G38410.1"/>
    <property type="gene ID" value="AT2G38410"/>
</dbReference>
<dbReference type="KEGG" id="ath:AT2G38410"/>
<dbReference type="Araport" id="AT2G38410"/>
<dbReference type="TAIR" id="AT2G38410"/>
<dbReference type="eggNOG" id="KOG1087">
    <property type="taxonomic scope" value="Eukaryota"/>
</dbReference>
<dbReference type="HOGENOM" id="CLU_026748_2_1_1"/>
<dbReference type="InParanoid" id="O80910"/>
<dbReference type="OMA" id="CDKVTTN"/>
<dbReference type="PhylomeDB" id="O80910"/>
<dbReference type="PRO" id="PR:O80910"/>
<dbReference type="Proteomes" id="UP000006548">
    <property type="component" value="Chromosome 2"/>
</dbReference>
<dbReference type="ExpressionAtlas" id="O80910">
    <property type="expression patterns" value="baseline and differential"/>
</dbReference>
<dbReference type="GO" id="GO:0005737">
    <property type="term" value="C:cytoplasm"/>
    <property type="evidence" value="ECO:0000314"/>
    <property type="project" value="UniProtKB"/>
</dbReference>
<dbReference type="GO" id="GO:0005769">
    <property type="term" value="C:early endosome"/>
    <property type="evidence" value="ECO:0000314"/>
    <property type="project" value="UniProtKB"/>
</dbReference>
<dbReference type="GO" id="GO:0031901">
    <property type="term" value="C:early endosome membrane"/>
    <property type="evidence" value="ECO:0007669"/>
    <property type="project" value="UniProtKB-SubCell"/>
</dbReference>
<dbReference type="GO" id="GO:0005771">
    <property type="term" value="C:multivesicular body"/>
    <property type="evidence" value="ECO:0007669"/>
    <property type="project" value="UniProtKB-SubCell"/>
</dbReference>
<dbReference type="GO" id="GO:0035091">
    <property type="term" value="F:phosphatidylinositol binding"/>
    <property type="evidence" value="ECO:0007669"/>
    <property type="project" value="InterPro"/>
</dbReference>
<dbReference type="GO" id="GO:0043130">
    <property type="term" value="F:ubiquitin binding"/>
    <property type="evidence" value="ECO:0000314"/>
    <property type="project" value="UniProtKB"/>
</dbReference>
<dbReference type="GO" id="GO:0043328">
    <property type="term" value="P:protein transport to vacuole involved in ubiquitin-dependent protein catabolic process via the multivesicular body sorting pathway"/>
    <property type="evidence" value="ECO:0000314"/>
    <property type="project" value="UniProtKB"/>
</dbReference>
<dbReference type="CDD" id="cd14231">
    <property type="entry name" value="GAT_GGA-like_plant"/>
    <property type="match status" value="1"/>
</dbReference>
<dbReference type="CDD" id="cd03561">
    <property type="entry name" value="VHS"/>
    <property type="match status" value="1"/>
</dbReference>
<dbReference type="FunFam" id="1.25.40.90:FF:000028">
    <property type="entry name" value="TOM1-like protein 2"/>
    <property type="match status" value="1"/>
</dbReference>
<dbReference type="Gene3D" id="1.20.58.160">
    <property type="match status" value="1"/>
</dbReference>
<dbReference type="Gene3D" id="1.25.40.90">
    <property type="match status" value="1"/>
</dbReference>
<dbReference type="InterPro" id="IPR008942">
    <property type="entry name" value="ENTH_VHS"/>
</dbReference>
<dbReference type="InterPro" id="IPR004152">
    <property type="entry name" value="GAT_dom"/>
</dbReference>
<dbReference type="InterPro" id="IPR038425">
    <property type="entry name" value="GAT_sf"/>
</dbReference>
<dbReference type="InterPro" id="IPR044836">
    <property type="entry name" value="TOL_plant"/>
</dbReference>
<dbReference type="InterPro" id="IPR002014">
    <property type="entry name" value="VHS_dom"/>
</dbReference>
<dbReference type="PANTHER" id="PTHR45898">
    <property type="entry name" value="TOM1-LIKE PROTEIN"/>
    <property type="match status" value="1"/>
</dbReference>
<dbReference type="PANTHER" id="PTHR45898:SF2">
    <property type="entry name" value="TOM1-LIKE PROTEIN 6"/>
    <property type="match status" value="1"/>
</dbReference>
<dbReference type="Pfam" id="PF03127">
    <property type="entry name" value="GAT"/>
    <property type="match status" value="1"/>
</dbReference>
<dbReference type="Pfam" id="PF00790">
    <property type="entry name" value="VHS"/>
    <property type="match status" value="1"/>
</dbReference>
<dbReference type="SMART" id="SM00288">
    <property type="entry name" value="VHS"/>
    <property type="match status" value="1"/>
</dbReference>
<dbReference type="SUPFAM" id="SSF48464">
    <property type="entry name" value="ENTH/VHS domain"/>
    <property type="match status" value="1"/>
</dbReference>
<dbReference type="SUPFAM" id="SSF89009">
    <property type="entry name" value="GAT-like domain"/>
    <property type="match status" value="1"/>
</dbReference>
<dbReference type="PROSITE" id="PS50909">
    <property type="entry name" value="GAT"/>
    <property type="match status" value="1"/>
</dbReference>
<dbReference type="PROSITE" id="PS50179">
    <property type="entry name" value="VHS"/>
    <property type="match status" value="1"/>
</dbReference>
<name>TOL6_ARATH</name>
<keyword id="KW-0007">Acetylation</keyword>
<keyword id="KW-0963">Cytoplasm</keyword>
<keyword id="KW-0967">Endosome</keyword>
<keyword id="KW-0472">Membrane</keyword>
<keyword id="KW-0597">Phosphoprotein</keyword>
<keyword id="KW-0653">Protein transport</keyword>
<keyword id="KW-1185">Reference proteome</keyword>
<keyword id="KW-0813">Transport</keyword>
<comment type="function">
    <text evidence="5 10">Acts as a gatekeeper for degradative protein sorting to the vacuole. Plays a role in recognition of ubiquitinated PIN2 auxin carrier at the plasma membrane and further to its endocytic sorting. Binds ubiquitin in vitro (PubMed:24316203). Might contribute to the loading of the ESCRT machinery (Probable).</text>
</comment>
<comment type="subcellular location">
    <subcellularLocation>
        <location evidence="4">Endosome</location>
        <location evidence="4">Multivesicular body</location>
    </subcellularLocation>
    <subcellularLocation>
        <location evidence="4">Cytoplasm</location>
    </subcellularLocation>
    <subcellularLocation>
        <location evidence="5">Early endosome membrane</location>
        <topology evidence="9">Peripheral membrane protein</topology>
    </subcellularLocation>
</comment>
<comment type="tissue specificity">
    <text evidence="6">Ubiquitously expressed.</text>
</comment>
<comment type="similarity">
    <text evidence="9">Belongs to the TOM1 family.</text>
</comment>
<feature type="initiator methionine" description="Removed" evidence="14">
    <location>
        <position position="1"/>
    </location>
</feature>
<feature type="chain" id="PRO_0000440681" description="TOM1-like protein 6">
    <location>
        <begin position="2"/>
        <end position="671"/>
    </location>
</feature>
<feature type="domain" description="VHS" evidence="1">
    <location>
        <begin position="15"/>
        <end position="144"/>
    </location>
</feature>
<feature type="domain" description="GAT" evidence="2">
    <location>
        <begin position="229"/>
        <end position="317"/>
    </location>
</feature>
<feature type="region of interest" description="Disordered" evidence="3">
    <location>
        <begin position="320"/>
        <end position="620"/>
    </location>
</feature>
<feature type="region of interest" description="Disordered" evidence="3">
    <location>
        <begin position="636"/>
        <end position="671"/>
    </location>
</feature>
<feature type="compositionally biased region" description="Low complexity" evidence="3">
    <location>
        <begin position="334"/>
        <end position="362"/>
    </location>
</feature>
<feature type="compositionally biased region" description="Acidic residues" evidence="3">
    <location>
        <begin position="372"/>
        <end position="382"/>
    </location>
</feature>
<feature type="compositionally biased region" description="Polar residues" evidence="3">
    <location>
        <begin position="395"/>
        <end position="405"/>
    </location>
</feature>
<feature type="compositionally biased region" description="Low complexity" evidence="3">
    <location>
        <begin position="407"/>
        <end position="417"/>
    </location>
</feature>
<feature type="compositionally biased region" description="Pro residues" evidence="3">
    <location>
        <begin position="444"/>
        <end position="459"/>
    </location>
</feature>
<feature type="compositionally biased region" description="Low complexity" evidence="3">
    <location>
        <begin position="483"/>
        <end position="554"/>
    </location>
</feature>
<feature type="compositionally biased region" description="Polar residues" evidence="3">
    <location>
        <begin position="562"/>
        <end position="598"/>
    </location>
</feature>
<feature type="compositionally biased region" description="Polar residues" evidence="3">
    <location>
        <begin position="605"/>
        <end position="616"/>
    </location>
</feature>
<feature type="compositionally biased region" description="Low complexity" evidence="3">
    <location>
        <begin position="647"/>
        <end position="663"/>
    </location>
</feature>
<feature type="modified residue" description="N-acetylalanine" evidence="14">
    <location>
        <position position="2"/>
    </location>
</feature>
<feature type="modified residue" description="Phosphoserine" evidence="13">
    <location>
        <position position="147"/>
    </location>
</feature>
<feature type="modified residue" description="Phosphoserine" evidence="13">
    <location>
        <position position="596"/>
    </location>
</feature>